<comment type="function">
    <text evidence="1">Can catalyze the hydrolysis of ATP in the presence of single-stranded DNA, the ATP-dependent uptake of single-stranded DNA by duplex DNA, and the ATP-dependent hybridization of homologous single-stranded DNAs. It interacts with LexA causing its activation and leading to its autocatalytic cleavage.</text>
</comment>
<comment type="subcellular location">
    <subcellularLocation>
        <location evidence="1">Cytoplasm</location>
    </subcellularLocation>
</comment>
<comment type="similarity">
    <text evidence="1">Belongs to the RecA family.</text>
</comment>
<evidence type="ECO:0000255" key="1">
    <source>
        <dbReference type="HAMAP-Rule" id="MF_00268"/>
    </source>
</evidence>
<evidence type="ECO:0000256" key="2">
    <source>
        <dbReference type="SAM" id="MobiDB-lite"/>
    </source>
</evidence>
<keyword id="KW-0067">ATP-binding</keyword>
<keyword id="KW-0963">Cytoplasm</keyword>
<keyword id="KW-0227">DNA damage</keyword>
<keyword id="KW-0233">DNA recombination</keyword>
<keyword id="KW-0234">DNA repair</keyword>
<keyword id="KW-0238">DNA-binding</keyword>
<keyword id="KW-0547">Nucleotide-binding</keyword>
<keyword id="KW-0742">SOS response</keyword>
<reference key="1">
    <citation type="journal article" date="2011" name="Proc. Natl. Acad. Sci. U.S.A.">
        <title>Genomic anatomy of Escherichia coli O157:H7 outbreaks.</title>
        <authorList>
            <person name="Eppinger M."/>
            <person name="Mammel M.K."/>
            <person name="Leclerc J.E."/>
            <person name="Ravel J."/>
            <person name="Cebula T.A."/>
        </authorList>
    </citation>
    <scope>NUCLEOTIDE SEQUENCE [LARGE SCALE GENOMIC DNA]</scope>
    <source>
        <strain>EC4115 / EHEC</strain>
    </source>
</reference>
<sequence>MAIDENKQKALAAALGQIEKQFGKGSIMRLGEDRSMDVETISTGSLSLDIALGAGGLPMGRIVEIYGPESSGKTTLTLQVIAAAQREGKTCAFIDAEHALDPIYARKLGVDIDNLLCSQPDTGEQALEICDALARSGAVDVIVVDSVAALTPKAEIEGEIGDSHMGLAARMMSQAMRKLAGNLKQSNTLLIFINQIRMKIGVMFGNPETTTGGNALKFYASVRLDIRRIGAVKEGENVVGSETRVKVVKNKIAAPFKQAEFQILYGEGINFYGELVDLGVKEKLIEKAGAWYSYKGEKIGQGKANATAWLKDNPETAKEIEKKVRELLLSNPNSTPDFSVDDSEGVAETNEDF</sequence>
<proteinExistence type="inferred from homology"/>
<accession>B5Z2B0</accession>
<name>RECA_ECO5E</name>
<feature type="chain" id="PRO_1000114331" description="Protein RecA">
    <location>
        <begin position="1"/>
        <end position="353"/>
    </location>
</feature>
<feature type="region of interest" description="Disordered" evidence="2">
    <location>
        <begin position="330"/>
        <end position="353"/>
    </location>
</feature>
<feature type="compositionally biased region" description="Acidic residues" evidence="2">
    <location>
        <begin position="339"/>
        <end position="353"/>
    </location>
</feature>
<feature type="binding site" evidence="1">
    <location>
        <begin position="67"/>
        <end position="74"/>
    </location>
    <ligand>
        <name>ATP</name>
        <dbReference type="ChEBI" id="CHEBI:30616"/>
    </ligand>
</feature>
<organism>
    <name type="scientific">Escherichia coli O157:H7 (strain EC4115 / EHEC)</name>
    <dbReference type="NCBI Taxonomy" id="444450"/>
    <lineage>
        <taxon>Bacteria</taxon>
        <taxon>Pseudomonadati</taxon>
        <taxon>Pseudomonadota</taxon>
        <taxon>Gammaproteobacteria</taxon>
        <taxon>Enterobacterales</taxon>
        <taxon>Enterobacteriaceae</taxon>
        <taxon>Escherichia</taxon>
    </lineage>
</organism>
<protein>
    <recommendedName>
        <fullName evidence="1">Protein RecA</fullName>
    </recommendedName>
    <alternativeName>
        <fullName evidence="1">Recombinase A</fullName>
    </alternativeName>
</protein>
<gene>
    <name evidence="1" type="primary">recA</name>
    <name type="ordered locus">ECH74115_3946</name>
</gene>
<dbReference type="EMBL" id="CP001164">
    <property type="protein sequence ID" value="ACI36152.1"/>
    <property type="molecule type" value="Genomic_DNA"/>
</dbReference>
<dbReference type="RefSeq" id="WP_000963143.1">
    <property type="nucleotide sequence ID" value="NC_011353.1"/>
</dbReference>
<dbReference type="SMR" id="B5Z2B0"/>
<dbReference type="GeneID" id="93779312"/>
<dbReference type="KEGG" id="ecf:ECH74115_3946"/>
<dbReference type="HOGENOM" id="CLU_040469_3_2_6"/>
<dbReference type="GO" id="GO:0005829">
    <property type="term" value="C:cytosol"/>
    <property type="evidence" value="ECO:0007669"/>
    <property type="project" value="TreeGrafter"/>
</dbReference>
<dbReference type="GO" id="GO:0005524">
    <property type="term" value="F:ATP binding"/>
    <property type="evidence" value="ECO:0007669"/>
    <property type="project" value="UniProtKB-UniRule"/>
</dbReference>
<dbReference type="GO" id="GO:0016887">
    <property type="term" value="F:ATP hydrolysis activity"/>
    <property type="evidence" value="ECO:0007669"/>
    <property type="project" value="InterPro"/>
</dbReference>
<dbReference type="GO" id="GO:0140664">
    <property type="term" value="F:ATP-dependent DNA damage sensor activity"/>
    <property type="evidence" value="ECO:0007669"/>
    <property type="project" value="InterPro"/>
</dbReference>
<dbReference type="GO" id="GO:0003684">
    <property type="term" value="F:damaged DNA binding"/>
    <property type="evidence" value="ECO:0007669"/>
    <property type="project" value="UniProtKB-UniRule"/>
</dbReference>
<dbReference type="GO" id="GO:0003697">
    <property type="term" value="F:single-stranded DNA binding"/>
    <property type="evidence" value="ECO:0007669"/>
    <property type="project" value="UniProtKB-UniRule"/>
</dbReference>
<dbReference type="GO" id="GO:0006310">
    <property type="term" value="P:DNA recombination"/>
    <property type="evidence" value="ECO:0007669"/>
    <property type="project" value="UniProtKB-UniRule"/>
</dbReference>
<dbReference type="GO" id="GO:0006281">
    <property type="term" value="P:DNA repair"/>
    <property type="evidence" value="ECO:0007669"/>
    <property type="project" value="UniProtKB-UniRule"/>
</dbReference>
<dbReference type="GO" id="GO:0009432">
    <property type="term" value="P:SOS response"/>
    <property type="evidence" value="ECO:0007669"/>
    <property type="project" value="UniProtKB-UniRule"/>
</dbReference>
<dbReference type="CDD" id="cd00983">
    <property type="entry name" value="RecA"/>
    <property type="match status" value="1"/>
</dbReference>
<dbReference type="FunFam" id="3.40.50.300:FF:000087">
    <property type="entry name" value="Recombinase RecA"/>
    <property type="match status" value="1"/>
</dbReference>
<dbReference type="Gene3D" id="3.40.50.300">
    <property type="entry name" value="P-loop containing nucleotide triphosphate hydrolases"/>
    <property type="match status" value="1"/>
</dbReference>
<dbReference type="HAMAP" id="MF_00268">
    <property type="entry name" value="RecA"/>
    <property type="match status" value="1"/>
</dbReference>
<dbReference type="InterPro" id="IPR003593">
    <property type="entry name" value="AAA+_ATPase"/>
</dbReference>
<dbReference type="InterPro" id="IPR013765">
    <property type="entry name" value="DNA_recomb/repair_RecA"/>
</dbReference>
<dbReference type="InterPro" id="IPR020584">
    <property type="entry name" value="DNA_recomb/repair_RecA_CS"/>
</dbReference>
<dbReference type="InterPro" id="IPR027417">
    <property type="entry name" value="P-loop_NTPase"/>
</dbReference>
<dbReference type="InterPro" id="IPR049261">
    <property type="entry name" value="RecA-like_C"/>
</dbReference>
<dbReference type="InterPro" id="IPR049428">
    <property type="entry name" value="RecA-like_N"/>
</dbReference>
<dbReference type="InterPro" id="IPR020588">
    <property type="entry name" value="RecA_ATP-bd"/>
</dbReference>
<dbReference type="InterPro" id="IPR023400">
    <property type="entry name" value="RecA_C_sf"/>
</dbReference>
<dbReference type="InterPro" id="IPR020587">
    <property type="entry name" value="RecA_monomer-monomer_interface"/>
</dbReference>
<dbReference type="NCBIfam" id="TIGR02012">
    <property type="entry name" value="tigrfam_recA"/>
    <property type="match status" value="1"/>
</dbReference>
<dbReference type="PANTHER" id="PTHR45900:SF1">
    <property type="entry name" value="MITOCHONDRIAL DNA REPAIR PROTEIN RECA HOMOLOG-RELATED"/>
    <property type="match status" value="1"/>
</dbReference>
<dbReference type="PANTHER" id="PTHR45900">
    <property type="entry name" value="RECA"/>
    <property type="match status" value="1"/>
</dbReference>
<dbReference type="Pfam" id="PF00154">
    <property type="entry name" value="RecA"/>
    <property type="match status" value="1"/>
</dbReference>
<dbReference type="Pfam" id="PF21096">
    <property type="entry name" value="RecA_C"/>
    <property type="match status" value="1"/>
</dbReference>
<dbReference type="PRINTS" id="PR00142">
    <property type="entry name" value="RECA"/>
</dbReference>
<dbReference type="SMART" id="SM00382">
    <property type="entry name" value="AAA"/>
    <property type="match status" value="1"/>
</dbReference>
<dbReference type="SUPFAM" id="SSF52540">
    <property type="entry name" value="P-loop containing nucleoside triphosphate hydrolases"/>
    <property type="match status" value="1"/>
</dbReference>
<dbReference type="SUPFAM" id="SSF54752">
    <property type="entry name" value="RecA protein, C-terminal domain"/>
    <property type="match status" value="1"/>
</dbReference>
<dbReference type="PROSITE" id="PS00321">
    <property type="entry name" value="RECA_1"/>
    <property type="match status" value="1"/>
</dbReference>
<dbReference type="PROSITE" id="PS50162">
    <property type="entry name" value="RECA_2"/>
    <property type="match status" value="1"/>
</dbReference>
<dbReference type="PROSITE" id="PS50163">
    <property type="entry name" value="RECA_3"/>
    <property type="match status" value="1"/>
</dbReference>